<protein>
    <recommendedName>
        <fullName evidence="1">3-keto-L-gulonate-6-phosphate decarboxylase UlaD</fullName>
        <ecNumber evidence="1">4.1.1.85</ecNumber>
    </recommendedName>
    <alternativeName>
        <fullName evidence="1">3-dehydro-L-gulonate-6-phosphate decarboxylase</fullName>
    </alternativeName>
    <alternativeName>
        <fullName evidence="1">KGPDC</fullName>
    </alternativeName>
    <alternativeName>
        <fullName evidence="1">L-ascorbate utilization protein D</fullName>
    </alternativeName>
</protein>
<feature type="chain" id="PRO_1000067320" description="3-keto-L-gulonate-6-phosphate decarboxylase UlaD">
    <location>
        <begin position="1"/>
        <end position="216"/>
    </location>
</feature>
<feature type="binding site" evidence="1">
    <location>
        <position position="11"/>
    </location>
    <ligand>
        <name>substrate</name>
    </ligand>
</feature>
<feature type="binding site" evidence="1">
    <location>
        <position position="33"/>
    </location>
    <ligand>
        <name>Mg(2+)</name>
        <dbReference type="ChEBI" id="CHEBI:18420"/>
    </ligand>
</feature>
<feature type="binding site" evidence="1">
    <location>
        <position position="62"/>
    </location>
    <ligand>
        <name>Mg(2+)</name>
        <dbReference type="ChEBI" id="CHEBI:18420"/>
    </ligand>
</feature>
<feature type="binding site" evidence="1">
    <location>
        <position position="192"/>
    </location>
    <ligand>
        <name>substrate</name>
    </ligand>
</feature>
<feature type="site" description="Transition state stabilizer" evidence="1">
    <location>
        <position position="64"/>
    </location>
</feature>
<feature type="site" description="Transition state stabilizer" evidence="1">
    <location>
        <position position="67"/>
    </location>
</feature>
<reference key="1">
    <citation type="journal article" date="2006" name="Mol. Microbiol.">
        <title>Role of pathogenicity island-associated integrases in the genome plasticity of uropathogenic Escherichia coli strain 536.</title>
        <authorList>
            <person name="Hochhut B."/>
            <person name="Wilde C."/>
            <person name="Balling G."/>
            <person name="Middendorf B."/>
            <person name="Dobrindt U."/>
            <person name="Brzuszkiewicz E."/>
            <person name="Gottschalk G."/>
            <person name="Carniel E."/>
            <person name="Hacker J."/>
        </authorList>
    </citation>
    <scope>NUCLEOTIDE SEQUENCE [LARGE SCALE GENOMIC DNA]</scope>
    <source>
        <strain>536 / UPEC</strain>
    </source>
</reference>
<organism>
    <name type="scientific">Escherichia coli O6:K15:H31 (strain 536 / UPEC)</name>
    <dbReference type="NCBI Taxonomy" id="362663"/>
    <lineage>
        <taxon>Bacteria</taxon>
        <taxon>Pseudomonadati</taxon>
        <taxon>Pseudomonadota</taxon>
        <taxon>Gammaproteobacteria</taxon>
        <taxon>Enterobacterales</taxon>
        <taxon>Enterobacteriaceae</taxon>
        <taxon>Escherichia</taxon>
    </lineage>
</organism>
<evidence type="ECO:0000255" key="1">
    <source>
        <dbReference type="HAMAP-Rule" id="MF_01267"/>
    </source>
</evidence>
<dbReference type="EC" id="4.1.1.85" evidence="1"/>
<dbReference type="EMBL" id="CP000247">
    <property type="protein sequence ID" value="ABG72382.1"/>
    <property type="molecule type" value="Genomic_DNA"/>
</dbReference>
<dbReference type="RefSeq" id="WP_000056749.1">
    <property type="nucleotide sequence ID" value="NC_008253.1"/>
</dbReference>
<dbReference type="SMR" id="Q0T9J7"/>
<dbReference type="KEGG" id="ecp:ECP_4441"/>
<dbReference type="HOGENOM" id="CLU_081825_0_0_6"/>
<dbReference type="UniPathway" id="UPA00263">
    <property type="reaction ID" value="UER00378"/>
</dbReference>
<dbReference type="Proteomes" id="UP000009182">
    <property type="component" value="Chromosome"/>
</dbReference>
<dbReference type="GO" id="GO:0033982">
    <property type="term" value="F:3-dehydro-L-gulonate-6-phosphate decarboxylase activity"/>
    <property type="evidence" value="ECO:0007669"/>
    <property type="project" value="UniProtKB-EC"/>
</dbReference>
<dbReference type="GO" id="GO:0000287">
    <property type="term" value="F:magnesium ion binding"/>
    <property type="evidence" value="ECO:0007669"/>
    <property type="project" value="UniProtKB-UniRule"/>
</dbReference>
<dbReference type="GO" id="GO:0004590">
    <property type="term" value="F:orotidine-5'-phosphate decarboxylase activity"/>
    <property type="evidence" value="ECO:0007669"/>
    <property type="project" value="InterPro"/>
</dbReference>
<dbReference type="GO" id="GO:0006207">
    <property type="term" value="P:'de novo' pyrimidine nucleobase biosynthetic process"/>
    <property type="evidence" value="ECO:0007669"/>
    <property type="project" value="InterPro"/>
</dbReference>
<dbReference type="GO" id="GO:0019854">
    <property type="term" value="P:L-ascorbic acid catabolic process"/>
    <property type="evidence" value="ECO:0007669"/>
    <property type="project" value="UniProtKB-UniRule"/>
</dbReference>
<dbReference type="CDD" id="cd04726">
    <property type="entry name" value="KGPDC_HPS"/>
    <property type="match status" value="1"/>
</dbReference>
<dbReference type="FunFam" id="3.20.20.70:FF:000022">
    <property type="entry name" value="3-keto-L-gulonate-6-phosphate decarboxylase UlaD"/>
    <property type="match status" value="1"/>
</dbReference>
<dbReference type="Gene3D" id="3.20.20.70">
    <property type="entry name" value="Aldolase class I"/>
    <property type="match status" value="1"/>
</dbReference>
<dbReference type="HAMAP" id="MF_01267">
    <property type="entry name" value="UlaD"/>
    <property type="match status" value="1"/>
</dbReference>
<dbReference type="InterPro" id="IPR023942">
    <property type="entry name" value="3-keto-L-gulonate6Pdecase_UlaD"/>
</dbReference>
<dbReference type="InterPro" id="IPR013785">
    <property type="entry name" value="Aldolase_TIM"/>
</dbReference>
<dbReference type="InterPro" id="IPR041710">
    <property type="entry name" value="HPS/KGPDC"/>
</dbReference>
<dbReference type="InterPro" id="IPR001754">
    <property type="entry name" value="OMPdeCOase_dom"/>
</dbReference>
<dbReference type="InterPro" id="IPR011060">
    <property type="entry name" value="RibuloseP-bd_barrel"/>
</dbReference>
<dbReference type="NCBIfam" id="NF009832">
    <property type="entry name" value="PRK13306.1"/>
    <property type="match status" value="1"/>
</dbReference>
<dbReference type="PANTHER" id="PTHR35039">
    <property type="entry name" value="3-KETO-L-GULONATE-6-PHOSPHATE DECARBOXYLASE SGBH-RELATED"/>
    <property type="match status" value="1"/>
</dbReference>
<dbReference type="PANTHER" id="PTHR35039:SF3">
    <property type="entry name" value="3-KETO-L-GULONATE-6-PHOSPHATE DECARBOXYLASE SGBH-RELATED"/>
    <property type="match status" value="1"/>
</dbReference>
<dbReference type="Pfam" id="PF00215">
    <property type="entry name" value="OMPdecase"/>
    <property type="match status" value="1"/>
</dbReference>
<dbReference type="SMART" id="SM00934">
    <property type="entry name" value="OMPdecase"/>
    <property type="match status" value="1"/>
</dbReference>
<dbReference type="SUPFAM" id="SSF51366">
    <property type="entry name" value="Ribulose-phoshate binding barrel"/>
    <property type="match status" value="1"/>
</dbReference>
<accession>Q0T9J7</accession>
<keyword id="KW-0119">Carbohydrate metabolism</keyword>
<keyword id="KW-0210">Decarboxylase</keyword>
<keyword id="KW-0456">Lyase</keyword>
<keyword id="KW-0460">Magnesium</keyword>
<keyword id="KW-0479">Metal-binding</keyword>
<proteinExistence type="inferred from homology"/>
<comment type="function">
    <text evidence="1">Catalyzes the decarboxylation of 3-keto-L-gulonate-6-P into L-xylulose-5-P. Is involved in the anaerobic L-ascorbate utilization.</text>
</comment>
<comment type="catalytic activity">
    <reaction evidence="1">
        <text>3-dehydro-L-gulonate 6-phosphate + H(+) = L-xylulose 5-phosphate + CO2</text>
        <dbReference type="Rhea" id="RHEA:14353"/>
        <dbReference type="ChEBI" id="CHEBI:15378"/>
        <dbReference type="ChEBI" id="CHEBI:16526"/>
        <dbReference type="ChEBI" id="CHEBI:57829"/>
        <dbReference type="ChEBI" id="CHEBI:58774"/>
        <dbReference type="EC" id="4.1.1.85"/>
    </reaction>
</comment>
<comment type="cofactor">
    <cofactor evidence="1">
        <name>Mg(2+)</name>
        <dbReference type="ChEBI" id="CHEBI:18420"/>
    </cofactor>
    <text evidence="1">Binds 1 Mg(2+) ion per subunit.</text>
</comment>
<comment type="pathway">
    <text evidence="1">Cofactor degradation; L-ascorbate degradation; D-xylulose 5-phosphate from L-ascorbate: step 2/4.</text>
</comment>
<comment type="subunit">
    <text evidence="1">Homodimer.</text>
</comment>
<comment type="induction">
    <text evidence="1">Induced by L-ascorbate. Repressed by UlaR.</text>
</comment>
<comment type="similarity">
    <text evidence="1">Belongs to the HPS/KGPDC family. KGPDC subfamily.</text>
</comment>
<gene>
    <name evidence="1" type="primary">ulaD</name>
    <name type="ordered locus">ECP_4441</name>
</gene>
<name>ULAD_ECOL5</name>
<sequence length="216" mass="23578">MSLPMLQVALDNQTMDSAYETTRLIAEEVDIIEVGTILCVGEGVRAVRDLKALYPHKIVLADAKIADAGKILSRMCFEANADWVTVICCADINTAKGALDVAKEFNGDVQIELTGYWTWEQAQQWRDAGIGQVVYHRSRDAQAAGVAWGEADITAIKRLSDMGFKVTVTGGLALEDLPLFKGIPIHVFIAGRSIRDAASPVEAARQFKRSIAELWG</sequence>